<accession>Q0HDU8</accession>
<keyword id="KW-0028">Amino-acid biosynthesis</keyword>
<keyword id="KW-0055">Arginine biosynthesis</keyword>
<keyword id="KW-0067">ATP-binding</keyword>
<keyword id="KW-0963">Cytoplasm</keyword>
<keyword id="KW-0436">Ligase</keyword>
<keyword id="KW-0547">Nucleotide-binding</keyword>
<reference key="1">
    <citation type="submission" date="2006-08" db="EMBL/GenBank/DDBJ databases">
        <title>Complete sequence of Shewanella sp. MR-4.</title>
        <authorList>
            <consortium name="US DOE Joint Genome Institute"/>
            <person name="Copeland A."/>
            <person name="Lucas S."/>
            <person name="Lapidus A."/>
            <person name="Barry K."/>
            <person name="Detter J.C."/>
            <person name="Glavina del Rio T."/>
            <person name="Hammon N."/>
            <person name="Israni S."/>
            <person name="Dalin E."/>
            <person name="Tice H."/>
            <person name="Pitluck S."/>
            <person name="Kiss H."/>
            <person name="Brettin T."/>
            <person name="Bruce D."/>
            <person name="Han C."/>
            <person name="Tapia R."/>
            <person name="Gilna P."/>
            <person name="Schmutz J."/>
            <person name="Larimer F."/>
            <person name="Land M."/>
            <person name="Hauser L."/>
            <person name="Kyrpides N."/>
            <person name="Mikhailova N."/>
            <person name="Nealson K."/>
            <person name="Konstantinidis K."/>
            <person name="Klappenbach J."/>
            <person name="Tiedje J."/>
            <person name="Richardson P."/>
        </authorList>
    </citation>
    <scope>NUCLEOTIDE SEQUENCE [LARGE SCALE GENOMIC DNA]</scope>
    <source>
        <strain>MR-4</strain>
    </source>
</reference>
<protein>
    <recommendedName>
        <fullName evidence="1">Argininosuccinate synthase</fullName>
        <ecNumber evidence="1">6.3.4.5</ecNumber>
    </recommendedName>
    <alternativeName>
        <fullName evidence="1">Citrulline--aspartate ligase</fullName>
    </alternativeName>
</protein>
<organism>
    <name type="scientific">Shewanella sp. (strain MR-4)</name>
    <dbReference type="NCBI Taxonomy" id="60480"/>
    <lineage>
        <taxon>Bacteria</taxon>
        <taxon>Pseudomonadati</taxon>
        <taxon>Pseudomonadota</taxon>
        <taxon>Gammaproteobacteria</taxon>
        <taxon>Alteromonadales</taxon>
        <taxon>Shewanellaceae</taxon>
        <taxon>Shewanella</taxon>
    </lineage>
</organism>
<comment type="catalytic activity">
    <reaction evidence="1">
        <text>L-citrulline + L-aspartate + ATP = 2-(N(omega)-L-arginino)succinate + AMP + diphosphate + H(+)</text>
        <dbReference type="Rhea" id="RHEA:10932"/>
        <dbReference type="ChEBI" id="CHEBI:15378"/>
        <dbReference type="ChEBI" id="CHEBI:29991"/>
        <dbReference type="ChEBI" id="CHEBI:30616"/>
        <dbReference type="ChEBI" id="CHEBI:33019"/>
        <dbReference type="ChEBI" id="CHEBI:57472"/>
        <dbReference type="ChEBI" id="CHEBI:57743"/>
        <dbReference type="ChEBI" id="CHEBI:456215"/>
        <dbReference type="EC" id="6.3.4.5"/>
    </reaction>
</comment>
<comment type="pathway">
    <text evidence="1">Amino-acid biosynthesis; L-arginine biosynthesis; L-arginine from L-ornithine and carbamoyl phosphate: step 2/3.</text>
</comment>
<comment type="subunit">
    <text evidence="1">Homotetramer.</text>
</comment>
<comment type="subcellular location">
    <subcellularLocation>
        <location evidence="1">Cytoplasm</location>
    </subcellularLocation>
</comment>
<comment type="similarity">
    <text evidence="1">Belongs to the argininosuccinate synthase family. Type 1 subfamily.</text>
</comment>
<name>ASSY_SHESM</name>
<gene>
    <name evidence="1" type="primary">argG</name>
    <name type="ordered locus">Shewmr4_3706</name>
</gene>
<sequence>MSIENKNTGVKKVVLAYSGGLDTSAIIPWLKETYDNCEIIAFCADVGQGEEELVGLTEKALASGASECHIVDLKEEFVKDYIYPTMATGAIYEGTYLLGTSMARPIIAKAQVEVARKVGADALCHGCTGKGNDQVRFEGCFAALAPDLKVIAPWREWTMQSREDLLAYLAERNIKTSASATKIYSRDANAFHISHEGGELEDPWNEPSKGVWTLTADPEDAPNQAEYVSLEVEHGRVTKVNGEALTPYAALMKLNAIAAPHGVGRIDITENRLVGMKSRGCYETPGGTVMFAALRAIEELVLDKTSRTWREQVGAQMAHLVYDGRWFTPLCKSLLAASESLAESVNGEVVVKLYKGHAIAVKKRSPNSLYSEAFATFGEDQVYDQKHAEGFIRLYSLASRIRALNAK</sequence>
<evidence type="ECO:0000255" key="1">
    <source>
        <dbReference type="HAMAP-Rule" id="MF_00005"/>
    </source>
</evidence>
<dbReference type="EC" id="6.3.4.5" evidence="1"/>
<dbReference type="EMBL" id="CP000446">
    <property type="protein sequence ID" value="ABI40769.1"/>
    <property type="molecule type" value="Genomic_DNA"/>
</dbReference>
<dbReference type="RefSeq" id="WP_011624428.1">
    <property type="nucleotide sequence ID" value="NC_008321.1"/>
</dbReference>
<dbReference type="SMR" id="Q0HDU8"/>
<dbReference type="KEGG" id="she:Shewmr4_3706"/>
<dbReference type="HOGENOM" id="CLU_032784_4_2_6"/>
<dbReference type="UniPathway" id="UPA00068">
    <property type="reaction ID" value="UER00113"/>
</dbReference>
<dbReference type="GO" id="GO:0005737">
    <property type="term" value="C:cytoplasm"/>
    <property type="evidence" value="ECO:0007669"/>
    <property type="project" value="UniProtKB-SubCell"/>
</dbReference>
<dbReference type="GO" id="GO:0004055">
    <property type="term" value="F:argininosuccinate synthase activity"/>
    <property type="evidence" value="ECO:0007669"/>
    <property type="project" value="UniProtKB-UniRule"/>
</dbReference>
<dbReference type="GO" id="GO:0005524">
    <property type="term" value="F:ATP binding"/>
    <property type="evidence" value="ECO:0007669"/>
    <property type="project" value="UniProtKB-UniRule"/>
</dbReference>
<dbReference type="GO" id="GO:0000053">
    <property type="term" value="P:argininosuccinate metabolic process"/>
    <property type="evidence" value="ECO:0007669"/>
    <property type="project" value="TreeGrafter"/>
</dbReference>
<dbReference type="GO" id="GO:0006526">
    <property type="term" value="P:L-arginine biosynthetic process"/>
    <property type="evidence" value="ECO:0007669"/>
    <property type="project" value="UniProtKB-UniRule"/>
</dbReference>
<dbReference type="GO" id="GO:0000050">
    <property type="term" value="P:urea cycle"/>
    <property type="evidence" value="ECO:0007669"/>
    <property type="project" value="TreeGrafter"/>
</dbReference>
<dbReference type="CDD" id="cd01999">
    <property type="entry name" value="ASS"/>
    <property type="match status" value="1"/>
</dbReference>
<dbReference type="FunFam" id="1.20.5.470:FF:000005">
    <property type="entry name" value="Argininosuccinate synthase"/>
    <property type="match status" value="1"/>
</dbReference>
<dbReference type="FunFam" id="3.40.50.620:FF:000019">
    <property type="entry name" value="Argininosuccinate synthase"/>
    <property type="match status" value="1"/>
</dbReference>
<dbReference type="FunFam" id="3.90.1260.10:FF:000007">
    <property type="entry name" value="Argininosuccinate synthase"/>
    <property type="match status" value="1"/>
</dbReference>
<dbReference type="Gene3D" id="3.90.1260.10">
    <property type="entry name" value="Argininosuccinate synthetase, chain A, domain 2"/>
    <property type="match status" value="1"/>
</dbReference>
<dbReference type="Gene3D" id="3.40.50.620">
    <property type="entry name" value="HUPs"/>
    <property type="match status" value="1"/>
</dbReference>
<dbReference type="Gene3D" id="1.20.5.470">
    <property type="entry name" value="Single helix bin"/>
    <property type="match status" value="1"/>
</dbReference>
<dbReference type="HAMAP" id="MF_00005">
    <property type="entry name" value="Arg_succ_synth_type1"/>
    <property type="match status" value="1"/>
</dbReference>
<dbReference type="InterPro" id="IPR048268">
    <property type="entry name" value="Arginosuc_syn_C"/>
</dbReference>
<dbReference type="InterPro" id="IPR048267">
    <property type="entry name" value="Arginosuc_syn_N"/>
</dbReference>
<dbReference type="InterPro" id="IPR001518">
    <property type="entry name" value="Arginosuc_synth"/>
</dbReference>
<dbReference type="InterPro" id="IPR018223">
    <property type="entry name" value="Arginosuc_synth_CS"/>
</dbReference>
<dbReference type="InterPro" id="IPR023434">
    <property type="entry name" value="Arginosuc_synth_type_1_subfam"/>
</dbReference>
<dbReference type="InterPro" id="IPR024074">
    <property type="entry name" value="AS_cat/multimer_dom_body"/>
</dbReference>
<dbReference type="InterPro" id="IPR014729">
    <property type="entry name" value="Rossmann-like_a/b/a_fold"/>
</dbReference>
<dbReference type="NCBIfam" id="TIGR00032">
    <property type="entry name" value="argG"/>
    <property type="match status" value="1"/>
</dbReference>
<dbReference type="NCBIfam" id="NF001770">
    <property type="entry name" value="PRK00509.1"/>
    <property type="match status" value="1"/>
</dbReference>
<dbReference type="PANTHER" id="PTHR11587">
    <property type="entry name" value="ARGININOSUCCINATE SYNTHASE"/>
    <property type="match status" value="1"/>
</dbReference>
<dbReference type="PANTHER" id="PTHR11587:SF2">
    <property type="entry name" value="ARGININOSUCCINATE SYNTHASE"/>
    <property type="match status" value="1"/>
</dbReference>
<dbReference type="Pfam" id="PF20979">
    <property type="entry name" value="Arginosuc_syn_C"/>
    <property type="match status" value="1"/>
</dbReference>
<dbReference type="Pfam" id="PF00764">
    <property type="entry name" value="Arginosuc_synth"/>
    <property type="match status" value="1"/>
</dbReference>
<dbReference type="SUPFAM" id="SSF52402">
    <property type="entry name" value="Adenine nucleotide alpha hydrolases-like"/>
    <property type="match status" value="1"/>
</dbReference>
<dbReference type="SUPFAM" id="SSF69864">
    <property type="entry name" value="Argininosuccinate synthetase, C-terminal domain"/>
    <property type="match status" value="1"/>
</dbReference>
<dbReference type="PROSITE" id="PS00564">
    <property type="entry name" value="ARGININOSUCCIN_SYN_1"/>
    <property type="match status" value="1"/>
</dbReference>
<dbReference type="PROSITE" id="PS00565">
    <property type="entry name" value="ARGININOSUCCIN_SYN_2"/>
    <property type="match status" value="1"/>
</dbReference>
<feature type="chain" id="PRO_0000263971" description="Argininosuccinate synthase">
    <location>
        <begin position="1"/>
        <end position="407"/>
    </location>
</feature>
<feature type="binding site" evidence="1">
    <location>
        <begin position="16"/>
        <end position="24"/>
    </location>
    <ligand>
        <name>ATP</name>
        <dbReference type="ChEBI" id="CHEBI:30616"/>
    </ligand>
</feature>
<feature type="binding site" evidence="1">
    <location>
        <position position="44"/>
    </location>
    <ligand>
        <name>ATP</name>
        <dbReference type="ChEBI" id="CHEBI:30616"/>
    </ligand>
</feature>
<feature type="binding site" evidence="1">
    <location>
        <position position="96"/>
    </location>
    <ligand>
        <name>L-citrulline</name>
        <dbReference type="ChEBI" id="CHEBI:57743"/>
    </ligand>
</feature>
<feature type="binding site" evidence="1">
    <location>
        <position position="101"/>
    </location>
    <ligand>
        <name>L-citrulline</name>
        <dbReference type="ChEBI" id="CHEBI:57743"/>
    </ligand>
</feature>
<feature type="binding site" evidence="1">
    <location>
        <position position="126"/>
    </location>
    <ligand>
        <name>ATP</name>
        <dbReference type="ChEBI" id="CHEBI:30616"/>
    </ligand>
</feature>
<feature type="binding site" evidence="1">
    <location>
        <position position="128"/>
    </location>
    <ligand>
        <name>L-aspartate</name>
        <dbReference type="ChEBI" id="CHEBI:29991"/>
    </ligand>
</feature>
<feature type="binding site" evidence="1">
    <location>
        <position position="132"/>
    </location>
    <ligand>
        <name>L-aspartate</name>
        <dbReference type="ChEBI" id="CHEBI:29991"/>
    </ligand>
</feature>
<feature type="binding site" evidence="1">
    <location>
        <position position="132"/>
    </location>
    <ligand>
        <name>L-citrulline</name>
        <dbReference type="ChEBI" id="CHEBI:57743"/>
    </ligand>
</feature>
<feature type="binding site" evidence="1">
    <location>
        <position position="133"/>
    </location>
    <ligand>
        <name>L-aspartate</name>
        <dbReference type="ChEBI" id="CHEBI:29991"/>
    </ligand>
</feature>
<feature type="binding site" evidence="1">
    <location>
        <position position="136"/>
    </location>
    <ligand>
        <name>L-citrulline</name>
        <dbReference type="ChEBI" id="CHEBI:57743"/>
    </ligand>
</feature>
<feature type="binding site" evidence="1">
    <location>
        <position position="185"/>
    </location>
    <ligand>
        <name>L-citrulline</name>
        <dbReference type="ChEBI" id="CHEBI:57743"/>
    </ligand>
</feature>
<feature type="binding site" evidence="1">
    <location>
        <position position="194"/>
    </location>
    <ligand>
        <name>L-citrulline</name>
        <dbReference type="ChEBI" id="CHEBI:57743"/>
    </ligand>
</feature>
<feature type="binding site" evidence="1">
    <location>
        <position position="270"/>
    </location>
    <ligand>
        <name>L-citrulline</name>
        <dbReference type="ChEBI" id="CHEBI:57743"/>
    </ligand>
</feature>
<feature type="binding site" evidence="1">
    <location>
        <position position="282"/>
    </location>
    <ligand>
        <name>L-citrulline</name>
        <dbReference type="ChEBI" id="CHEBI:57743"/>
    </ligand>
</feature>
<proteinExistence type="inferred from homology"/>